<name>TRMD_PSE14</name>
<sequence>MASLRIEVISLFPEMFSAISEYGITSRAVKQGLLQLTCWNPRDYTTDRHHTVDDRPFGGGPGMVMKIKPLEDALVQARQAAGDAAKVIYLSPQGRQLNQSAVRELAQEEAIILIAGRYEGIDERFIDAHVDEEWSIGDYVLSGGELPAMVLIDAVTRLLPGALGHVDSAEEDSFTDGLLDCPHYTRPEVYADQRVPDVLLSGNHAHIRRWRLQQSLGRTYERRADLLESRSLSGEEKKLLAEYIRERDDS</sequence>
<reference key="1">
    <citation type="journal article" date="2005" name="J. Bacteriol.">
        <title>Whole-genome sequence analysis of Pseudomonas syringae pv. phaseolicola 1448A reveals divergence among pathovars in genes involved in virulence and transposition.</title>
        <authorList>
            <person name="Joardar V."/>
            <person name="Lindeberg M."/>
            <person name="Jackson R.W."/>
            <person name="Selengut J."/>
            <person name="Dodson R."/>
            <person name="Brinkac L.M."/>
            <person name="Daugherty S.C."/>
            <person name="DeBoy R.T."/>
            <person name="Durkin A.S."/>
            <person name="Gwinn Giglio M."/>
            <person name="Madupu R."/>
            <person name="Nelson W.C."/>
            <person name="Rosovitz M.J."/>
            <person name="Sullivan S.A."/>
            <person name="Crabtree J."/>
            <person name="Creasy T."/>
            <person name="Davidsen T.M."/>
            <person name="Haft D.H."/>
            <person name="Zafar N."/>
            <person name="Zhou L."/>
            <person name="Halpin R."/>
            <person name="Holley T."/>
            <person name="Khouri H.M."/>
            <person name="Feldblyum T.V."/>
            <person name="White O."/>
            <person name="Fraser C.M."/>
            <person name="Chatterjee A.K."/>
            <person name="Cartinhour S."/>
            <person name="Schneider D."/>
            <person name="Mansfield J.W."/>
            <person name="Collmer A."/>
            <person name="Buell R."/>
        </authorList>
    </citation>
    <scope>NUCLEOTIDE SEQUENCE [LARGE SCALE GENOMIC DNA]</scope>
    <source>
        <strain>1448A / Race 6</strain>
    </source>
</reference>
<proteinExistence type="inferred from homology"/>
<accession>Q48LV8</accession>
<gene>
    <name evidence="1" type="primary">trmD</name>
    <name type="ordered locus">PSPPH_1356</name>
</gene>
<keyword id="KW-0963">Cytoplasm</keyword>
<keyword id="KW-0489">Methyltransferase</keyword>
<keyword id="KW-0949">S-adenosyl-L-methionine</keyword>
<keyword id="KW-0808">Transferase</keyword>
<keyword id="KW-0819">tRNA processing</keyword>
<evidence type="ECO:0000255" key="1">
    <source>
        <dbReference type="HAMAP-Rule" id="MF_00605"/>
    </source>
</evidence>
<feature type="chain" id="PRO_0000257450" description="tRNA (guanine-N(1)-)-methyltransferase">
    <location>
        <begin position="1"/>
        <end position="250"/>
    </location>
</feature>
<feature type="binding site" evidence="1">
    <location>
        <position position="116"/>
    </location>
    <ligand>
        <name>S-adenosyl-L-methionine</name>
        <dbReference type="ChEBI" id="CHEBI:59789"/>
    </ligand>
</feature>
<feature type="binding site" evidence="1">
    <location>
        <begin position="136"/>
        <end position="141"/>
    </location>
    <ligand>
        <name>S-adenosyl-L-methionine</name>
        <dbReference type="ChEBI" id="CHEBI:59789"/>
    </ligand>
</feature>
<comment type="function">
    <text evidence="1">Specifically methylates guanosine-37 in various tRNAs.</text>
</comment>
<comment type="catalytic activity">
    <reaction evidence="1">
        <text>guanosine(37) in tRNA + S-adenosyl-L-methionine = N(1)-methylguanosine(37) in tRNA + S-adenosyl-L-homocysteine + H(+)</text>
        <dbReference type="Rhea" id="RHEA:36899"/>
        <dbReference type="Rhea" id="RHEA-COMP:10145"/>
        <dbReference type="Rhea" id="RHEA-COMP:10147"/>
        <dbReference type="ChEBI" id="CHEBI:15378"/>
        <dbReference type="ChEBI" id="CHEBI:57856"/>
        <dbReference type="ChEBI" id="CHEBI:59789"/>
        <dbReference type="ChEBI" id="CHEBI:73542"/>
        <dbReference type="ChEBI" id="CHEBI:74269"/>
        <dbReference type="EC" id="2.1.1.228"/>
    </reaction>
</comment>
<comment type="subunit">
    <text evidence="1">Homodimer.</text>
</comment>
<comment type="subcellular location">
    <subcellularLocation>
        <location evidence="1">Cytoplasm</location>
    </subcellularLocation>
</comment>
<comment type="similarity">
    <text evidence="1">Belongs to the RNA methyltransferase TrmD family.</text>
</comment>
<dbReference type="EC" id="2.1.1.228" evidence="1"/>
<dbReference type="EMBL" id="CP000058">
    <property type="protein sequence ID" value="AAZ35088.1"/>
    <property type="molecule type" value="Genomic_DNA"/>
</dbReference>
<dbReference type="RefSeq" id="WP_002552523.1">
    <property type="nucleotide sequence ID" value="NC_005773.3"/>
</dbReference>
<dbReference type="SMR" id="Q48LV8"/>
<dbReference type="GeneID" id="96217688"/>
<dbReference type="KEGG" id="psp:PSPPH_1356"/>
<dbReference type="eggNOG" id="COG0336">
    <property type="taxonomic scope" value="Bacteria"/>
</dbReference>
<dbReference type="HOGENOM" id="CLU_047363_0_2_6"/>
<dbReference type="Proteomes" id="UP000000551">
    <property type="component" value="Chromosome"/>
</dbReference>
<dbReference type="GO" id="GO:0005829">
    <property type="term" value="C:cytosol"/>
    <property type="evidence" value="ECO:0007669"/>
    <property type="project" value="TreeGrafter"/>
</dbReference>
<dbReference type="GO" id="GO:0052906">
    <property type="term" value="F:tRNA (guanine(37)-N1)-methyltransferase activity"/>
    <property type="evidence" value="ECO:0007669"/>
    <property type="project" value="UniProtKB-UniRule"/>
</dbReference>
<dbReference type="GO" id="GO:0002939">
    <property type="term" value="P:tRNA N1-guanine methylation"/>
    <property type="evidence" value="ECO:0007669"/>
    <property type="project" value="TreeGrafter"/>
</dbReference>
<dbReference type="CDD" id="cd18080">
    <property type="entry name" value="TrmD-like"/>
    <property type="match status" value="1"/>
</dbReference>
<dbReference type="FunFam" id="1.10.1270.20:FF:000001">
    <property type="entry name" value="tRNA (guanine-N(1)-)-methyltransferase"/>
    <property type="match status" value="1"/>
</dbReference>
<dbReference type="FunFam" id="3.40.1280.10:FF:000001">
    <property type="entry name" value="tRNA (guanine-N(1)-)-methyltransferase"/>
    <property type="match status" value="1"/>
</dbReference>
<dbReference type="Gene3D" id="3.40.1280.10">
    <property type="match status" value="1"/>
</dbReference>
<dbReference type="Gene3D" id="1.10.1270.20">
    <property type="entry name" value="tRNA(m1g37)methyltransferase, domain 2"/>
    <property type="match status" value="1"/>
</dbReference>
<dbReference type="HAMAP" id="MF_00605">
    <property type="entry name" value="TrmD"/>
    <property type="match status" value="1"/>
</dbReference>
<dbReference type="InterPro" id="IPR029028">
    <property type="entry name" value="Alpha/beta_knot_MTases"/>
</dbReference>
<dbReference type="InterPro" id="IPR023148">
    <property type="entry name" value="tRNA_m1G_MeTrfase_C_sf"/>
</dbReference>
<dbReference type="InterPro" id="IPR002649">
    <property type="entry name" value="tRNA_m1G_MeTrfase_TrmD"/>
</dbReference>
<dbReference type="InterPro" id="IPR029026">
    <property type="entry name" value="tRNA_m1G_MTases_N"/>
</dbReference>
<dbReference type="InterPro" id="IPR016009">
    <property type="entry name" value="tRNA_MeTrfase_TRMD/TRM10"/>
</dbReference>
<dbReference type="NCBIfam" id="NF000648">
    <property type="entry name" value="PRK00026.1"/>
    <property type="match status" value="1"/>
</dbReference>
<dbReference type="NCBIfam" id="TIGR00088">
    <property type="entry name" value="trmD"/>
    <property type="match status" value="1"/>
</dbReference>
<dbReference type="PANTHER" id="PTHR46417">
    <property type="entry name" value="TRNA (GUANINE-N(1)-)-METHYLTRANSFERASE"/>
    <property type="match status" value="1"/>
</dbReference>
<dbReference type="PANTHER" id="PTHR46417:SF1">
    <property type="entry name" value="TRNA (GUANINE-N(1)-)-METHYLTRANSFERASE"/>
    <property type="match status" value="1"/>
</dbReference>
<dbReference type="Pfam" id="PF01746">
    <property type="entry name" value="tRNA_m1G_MT"/>
    <property type="match status" value="1"/>
</dbReference>
<dbReference type="PIRSF" id="PIRSF000386">
    <property type="entry name" value="tRNA_mtase"/>
    <property type="match status" value="1"/>
</dbReference>
<dbReference type="SUPFAM" id="SSF75217">
    <property type="entry name" value="alpha/beta knot"/>
    <property type="match status" value="1"/>
</dbReference>
<protein>
    <recommendedName>
        <fullName evidence="1">tRNA (guanine-N(1)-)-methyltransferase</fullName>
        <ecNumber evidence="1">2.1.1.228</ecNumber>
    </recommendedName>
    <alternativeName>
        <fullName evidence="1">M1G-methyltransferase</fullName>
    </alternativeName>
    <alternativeName>
        <fullName evidence="1">tRNA [GM37] methyltransferase</fullName>
    </alternativeName>
</protein>
<organism>
    <name type="scientific">Pseudomonas savastanoi pv. phaseolicola (strain 1448A / Race 6)</name>
    <name type="common">Pseudomonas syringae pv. phaseolicola (strain 1448A / Race 6)</name>
    <dbReference type="NCBI Taxonomy" id="264730"/>
    <lineage>
        <taxon>Bacteria</taxon>
        <taxon>Pseudomonadati</taxon>
        <taxon>Pseudomonadota</taxon>
        <taxon>Gammaproteobacteria</taxon>
        <taxon>Pseudomonadales</taxon>
        <taxon>Pseudomonadaceae</taxon>
        <taxon>Pseudomonas</taxon>
    </lineage>
</organism>